<gene>
    <name evidence="1" type="primary">sepF</name>
    <name type="ordered locus">BCE_3944</name>
</gene>
<proteinExistence type="inferred from homology"/>
<accession>Q732H0</accession>
<sequence length="156" mass="17743">MSWSKVKYFFFDTPEEKEAAQYSYEKEQTDMKKQQDPPEQQDVTFPKAQTKQNVVSIETAKQSSKVVLLEPRTYSEAQGIADHLKGRRAVVINLQRMSTDQAVRIVDFLSGTVYAIGGDIQKIGPKTFMCTPENVDIVGAISELFGEEEDTNIKRW</sequence>
<feature type="chain" id="PRO_0000333976" description="Cell division protein SepF">
    <location>
        <begin position="1"/>
        <end position="156"/>
    </location>
</feature>
<feature type="region of interest" description="Disordered" evidence="2">
    <location>
        <begin position="23"/>
        <end position="48"/>
    </location>
</feature>
<feature type="compositionally biased region" description="Basic and acidic residues" evidence="2">
    <location>
        <begin position="23"/>
        <end position="36"/>
    </location>
</feature>
<feature type="compositionally biased region" description="Polar residues" evidence="2">
    <location>
        <begin position="37"/>
        <end position="48"/>
    </location>
</feature>
<organism>
    <name type="scientific">Bacillus cereus (strain ATCC 10987 / NRS 248)</name>
    <dbReference type="NCBI Taxonomy" id="222523"/>
    <lineage>
        <taxon>Bacteria</taxon>
        <taxon>Bacillati</taxon>
        <taxon>Bacillota</taxon>
        <taxon>Bacilli</taxon>
        <taxon>Bacillales</taxon>
        <taxon>Bacillaceae</taxon>
        <taxon>Bacillus</taxon>
        <taxon>Bacillus cereus group</taxon>
    </lineage>
</organism>
<dbReference type="EMBL" id="AE017194">
    <property type="protein sequence ID" value="AAS42847.1"/>
    <property type="molecule type" value="Genomic_DNA"/>
</dbReference>
<dbReference type="SMR" id="Q732H0"/>
<dbReference type="KEGG" id="bca:BCE_3944"/>
<dbReference type="HOGENOM" id="CLU_078499_4_1_9"/>
<dbReference type="Proteomes" id="UP000002527">
    <property type="component" value="Chromosome"/>
</dbReference>
<dbReference type="GO" id="GO:0005737">
    <property type="term" value="C:cytoplasm"/>
    <property type="evidence" value="ECO:0007669"/>
    <property type="project" value="UniProtKB-SubCell"/>
</dbReference>
<dbReference type="GO" id="GO:0000917">
    <property type="term" value="P:division septum assembly"/>
    <property type="evidence" value="ECO:0007669"/>
    <property type="project" value="UniProtKB-KW"/>
</dbReference>
<dbReference type="GO" id="GO:0043093">
    <property type="term" value="P:FtsZ-dependent cytokinesis"/>
    <property type="evidence" value="ECO:0007669"/>
    <property type="project" value="UniProtKB-UniRule"/>
</dbReference>
<dbReference type="Gene3D" id="3.30.110.150">
    <property type="entry name" value="SepF-like protein"/>
    <property type="match status" value="1"/>
</dbReference>
<dbReference type="HAMAP" id="MF_01197">
    <property type="entry name" value="SepF"/>
    <property type="match status" value="1"/>
</dbReference>
<dbReference type="InterPro" id="IPR023052">
    <property type="entry name" value="Cell_div_SepF"/>
</dbReference>
<dbReference type="InterPro" id="IPR007561">
    <property type="entry name" value="Cell_div_SepF/SepF-rel"/>
</dbReference>
<dbReference type="InterPro" id="IPR038594">
    <property type="entry name" value="SepF-like_sf"/>
</dbReference>
<dbReference type="PANTHER" id="PTHR35798">
    <property type="entry name" value="CELL DIVISION PROTEIN SEPF"/>
    <property type="match status" value="1"/>
</dbReference>
<dbReference type="PANTHER" id="PTHR35798:SF1">
    <property type="entry name" value="CELL DIVISION PROTEIN SEPF"/>
    <property type="match status" value="1"/>
</dbReference>
<dbReference type="Pfam" id="PF04472">
    <property type="entry name" value="SepF"/>
    <property type="match status" value="1"/>
</dbReference>
<reference key="1">
    <citation type="journal article" date="2004" name="Nucleic Acids Res.">
        <title>The genome sequence of Bacillus cereus ATCC 10987 reveals metabolic adaptations and a large plasmid related to Bacillus anthracis pXO1.</title>
        <authorList>
            <person name="Rasko D.A."/>
            <person name="Ravel J."/>
            <person name="Oekstad O.A."/>
            <person name="Helgason E."/>
            <person name="Cer R.Z."/>
            <person name="Jiang L."/>
            <person name="Shores K.A."/>
            <person name="Fouts D.E."/>
            <person name="Tourasse N.J."/>
            <person name="Angiuoli S.V."/>
            <person name="Kolonay J.F."/>
            <person name="Nelson W.C."/>
            <person name="Kolstoe A.-B."/>
            <person name="Fraser C.M."/>
            <person name="Read T.D."/>
        </authorList>
    </citation>
    <scope>NUCLEOTIDE SEQUENCE [LARGE SCALE GENOMIC DNA]</scope>
    <source>
        <strain>ATCC 10987 / NRS 248</strain>
    </source>
</reference>
<keyword id="KW-0131">Cell cycle</keyword>
<keyword id="KW-0132">Cell division</keyword>
<keyword id="KW-0963">Cytoplasm</keyword>
<keyword id="KW-0717">Septation</keyword>
<protein>
    <recommendedName>
        <fullName evidence="1">Cell division protein SepF</fullName>
    </recommendedName>
</protein>
<evidence type="ECO:0000255" key="1">
    <source>
        <dbReference type="HAMAP-Rule" id="MF_01197"/>
    </source>
</evidence>
<evidence type="ECO:0000256" key="2">
    <source>
        <dbReference type="SAM" id="MobiDB-lite"/>
    </source>
</evidence>
<name>SEPF_BACC1</name>
<comment type="function">
    <text evidence="1">Cell division protein that is part of the divisome complex and is recruited early to the Z-ring. Probably stimulates Z-ring formation, perhaps through the cross-linking of FtsZ protofilaments. Its function overlaps with FtsA.</text>
</comment>
<comment type="subunit">
    <text evidence="1">Homodimer. Interacts with FtsZ.</text>
</comment>
<comment type="subcellular location">
    <subcellularLocation>
        <location evidence="1">Cytoplasm</location>
    </subcellularLocation>
    <text evidence="1">Localizes to the division site, in a FtsZ-dependent manner.</text>
</comment>
<comment type="similarity">
    <text evidence="1">Belongs to the SepF family.</text>
</comment>